<protein>
    <recommendedName>
        <fullName>Ubiquitin carboxyl-terminal hydrolase 7</fullName>
        <ecNumber evidence="1">3.4.19.12</ecNumber>
    </recommendedName>
    <alternativeName>
        <fullName>Deubiquitinating enzyme 7</fullName>
    </alternativeName>
    <alternativeName>
        <fullName>Ubiquitin thioesterase 7</fullName>
    </alternativeName>
    <alternativeName>
        <fullName>Ubiquitin-specific-processing protease 7</fullName>
    </alternativeName>
</protein>
<feature type="chain" id="PRO_0000268009" description="Ubiquitin carboxyl-terminal hydrolase 7">
    <location>
        <begin position="1"/>
        <end position="1129"/>
    </location>
</feature>
<feature type="domain" description="MATH" evidence="2">
    <location>
        <begin position="29"/>
        <end position="169"/>
    </location>
</feature>
<feature type="domain" description="USP">
    <location>
        <begin position="190"/>
        <end position="500"/>
    </location>
</feature>
<feature type="active site" description="Nucleophile" evidence="3 4">
    <location>
        <position position="199"/>
    </location>
</feature>
<feature type="active site" description="Proton acceptor" evidence="3 4">
    <location>
        <position position="439"/>
    </location>
</feature>
<sequence>MCSPDPEDMHILTNDIPSFDKSLDPYGPEGHLALDIERFSSFMNKPDSRIMSKPVIVRGIPWRILAICRHQQNNRQVATSRSRNNYNFGFFLQCNNDDLLQKRGMWRCYGQATLEVLNANGPPIQKKIHHSFHNTEVDWGFSNYDQYDTLTSPKDGYVIDDVIRLRCRFTADVPTGANYMWDSKKHTGCIGLRNQGATCYMNSILQSFYFTTGFRRAVYNMEVGTEPNESNIVLAMQRVFYELQMSSEAVETNSLTRAFGWDKLDAFNQHDVQEFCRVLLDNLETKMKGTSEEKSIPNLFRGNMKSYIKCLDVDYESSRTESFYDVQLNVLGMDSLERAFDAYTTPETLDDDNKYDAGDHGLQRAEKGVKFVELPPVLHVQLMRFQYCGVEQKINERFSFPEKMNLSNCCELGPMLNEEDCVYSLHAVLVHSGEFHGGHYVTYINVNLHESAVDPTATAKWCKFDDDVVSRTTTDDAIVSNFGGEKAMNSSAYMLVYVRDNAIDQVLAPIPDTQIPQSVSRTFEMERMHRNREKKKQEEEQMCMSITLVTPDILATNHSFDLIEPVTITDVLPHETVYKHMVTAELYQFVQEKLFEKSTLPKVDMFDSDDETRMKRKEILRRLKTKKFGFRLWRMTDSYTVDKPQKMASRLRPSDFIEYSIDTRLDHTLSHDTETIYVEHSQFLQPLNEYLPTRDILFFLKYYDAITDKFTIIGHVTLDSHKRLNLYRMTFCDLLGLPKDTELKYYIEHAPNHVEQIDDPNRSTISRLVDDQDGAIVIVEKADPTAKKDAKTKMIELYNDVEFEFSQQFYSKMPNEEPFELFTKRFCLEQKLTDVTEFIGSELNVDPRNVMLWTRVSGSRFEPNFDDYAVTGIQCKYLTLRTLHDPRQHKKYSVSYAIFPFPVNEVHTTRMFVRLYRQMPNGNVEELNLFPPKDGTVTDLIAEAKRYYPSVEGGSGKFRLLQIGTSPLNNQRVFQIYNENTAIVDLDQRPVYKQQAQHTLNCRIEEIPHDELDVAQGEFFCPVVHYDREPTKLFGVSFVIKIRNGELMTDVRDRLRRKLPDVSDAEFAKYKFALLSRDKLCRNIEFNAGEKVNLMDMANQTTGVPQVYIGLDHKSPSQHSNEAAIRILN</sequence>
<accession>Q60MK8</accession>
<accession>A8Y4P5</accession>
<gene>
    <name evidence="6" type="primary">math-33</name>
    <name evidence="6" type="ORF">CBG23105</name>
</gene>
<proteinExistence type="inferred from homology"/>
<name>UBP7_CAEBR</name>
<comment type="function">
    <text evidence="1">Hydrolase that deubiquitinates target proteins.</text>
</comment>
<comment type="catalytic activity">
    <reaction evidence="1">
        <text>Thiol-dependent hydrolysis of ester, thioester, amide, peptide and isopeptide bonds formed by the C-terminal Gly of ubiquitin (a 76-residue protein attached to proteins as an intracellular targeting signal).</text>
        <dbReference type="EC" id="3.4.19.12"/>
    </reaction>
</comment>
<comment type="subcellular location">
    <subcellularLocation>
        <location evidence="1">Nucleus</location>
    </subcellularLocation>
</comment>
<comment type="similarity">
    <text evidence="5">Belongs to the peptidase C19 family.</text>
</comment>
<keyword id="KW-0378">Hydrolase</keyword>
<keyword id="KW-0539">Nucleus</keyword>
<keyword id="KW-0645">Protease</keyword>
<keyword id="KW-1185">Reference proteome</keyword>
<keyword id="KW-0788">Thiol protease</keyword>
<keyword id="KW-0833">Ubl conjugation pathway</keyword>
<evidence type="ECO:0000250" key="1">
    <source>
        <dbReference type="UniProtKB" id="Q93009"/>
    </source>
</evidence>
<evidence type="ECO:0000255" key="2">
    <source>
        <dbReference type="PROSITE-ProRule" id="PRU00129"/>
    </source>
</evidence>
<evidence type="ECO:0000255" key="3">
    <source>
        <dbReference type="PROSITE-ProRule" id="PRU10092"/>
    </source>
</evidence>
<evidence type="ECO:0000255" key="4">
    <source>
        <dbReference type="PROSITE-ProRule" id="PRU10093"/>
    </source>
</evidence>
<evidence type="ECO:0000305" key="5"/>
<evidence type="ECO:0000312" key="6">
    <source>
        <dbReference type="WormBase" id="CBG23105"/>
    </source>
</evidence>
<organism>
    <name type="scientific">Caenorhabditis briggsae</name>
    <dbReference type="NCBI Taxonomy" id="6238"/>
    <lineage>
        <taxon>Eukaryota</taxon>
        <taxon>Metazoa</taxon>
        <taxon>Ecdysozoa</taxon>
        <taxon>Nematoda</taxon>
        <taxon>Chromadorea</taxon>
        <taxon>Rhabditida</taxon>
        <taxon>Rhabditina</taxon>
        <taxon>Rhabditomorpha</taxon>
        <taxon>Rhabditoidea</taxon>
        <taxon>Rhabditidae</taxon>
        <taxon>Peloderinae</taxon>
        <taxon>Caenorhabditis</taxon>
    </lineage>
</organism>
<reference key="1">
    <citation type="journal article" date="2003" name="PLoS Biol.">
        <title>The genome sequence of Caenorhabditis briggsae: a platform for comparative genomics.</title>
        <authorList>
            <person name="Stein L.D."/>
            <person name="Bao Z."/>
            <person name="Blasiar D."/>
            <person name="Blumenthal T."/>
            <person name="Brent M.R."/>
            <person name="Chen N."/>
            <person name="Chinwalla A."/>
            <person name="Clarke L."/>
            <person name="Clee C."/>
            <person name="Coghlan A."/>
            <person name="Coulson A."/>
            <person name="D'Eustachio P."/>
            <person name="Fitch D.H.A."/>
            <person name="Fulton L.A."/>
            <person name="Fulton R.E."/>
            <person name="Griffiths-Jones S."/>
            <person name="Harris T.W."/>
            <person name="Hillier L.W."/>
            <person name="Kamath R."/>
            <person name="Kuwabara P.E."/>
            <person name="Mardis E.R."/>
            <person name="Marra M.A."/>
            <person name="Miner T.L."/>
            <person name="Minx P."/>
            <person name="Mullikin J.C."/>
            <person name="Plumb R.W."/>
            <person name="Rogers J."/>
            <person name="Schein J.E."/>
            <person name="Sohrmann M."/>
            <person name="Spieth J."/>
            <person name="Stajich J.E."/>
            <person name="Wei C."/>
            <person name="Willey D."/>
            <person name="Wilson R.K."/>
            <person name="Durbin R.M."/>
            <person name="Waterston R.H."/>
        </authorList>
    </citation>
    <scope>NUCLEOTIDE SEQUENCE [LARGE SCALE GENOMIC DNA]</scope>
    <source>
        <strain>AF16</strain>
    </source>
</reference>
<dbReference type="EC" id="3.4.19.12" evidence="1"/>
<dbReference type="EMBL" id="HE601533">
    <property type="protein sequence ID" value="CAP39865.3"/>
    <property type="molecule type" value="Genomic_DNA"/>
</dbReference>
<dbReference type="SMR" id="Q60MK8"/>
<dbReference type="FunCoup" id="Q60MK8">
    <property type="interactions" value="3406"/>
</dbReference>
<dbReference type="STRING" id="6238.Q60MK8"/>
<dbReference type="KEGG" id="cbr:CBG_23105"/>
<dbReference type="CTD" id="8578439"/>
<dbReference type="WormBase" id="CBG23105">
    <property type="protein sequence ID" value="CBP46576"/>
    <property type="gene ID" value="WBGene00041522"/>
    <property type="gene designation" value="Cbr-math-33"/>
</dbReference>
<dbReference type="eggNOG" id="KOG1863">
    <property type="taxonomic scope" value="Eukaryota"/>
</dbReference>
<dbReference type="HOGENOM" id="CLU_003532_0_1_1"/>
<dbReference type="InParanoid" id="Q60MK8"/>
<dbReference type="OMA" id="QFLPCET"/>
<dbReference type="Proteomes" id="UP000008549">
    <property type="component" value="Unassembled WGS sequence"/>
</dbReference>
<dbReference type="GO" id="GO:0005829">
    <property type="term" value="C:cytosol"/>
    <property type="evidence" value="ECO:0000318"/>
    <property type="project" value="GO_Central"/>
</dbReference>
<dbReference type="GO" id="GO:0005634">
    <property type="term" value="C:nucleus"/>
    <property type="evidence" value="ECO:0000250"/>
    <property type="project" value="UniProtKB"/>
</dbReference>
<dbReference type="GO" id="GO:0004843">
    <property type="term" value="F:cysteine-type deubiquitinase activity"/>
    <property type="evidence" value="ECO:0000250"/>
    <property type="project" value="UniProtKB"/>
</dbReference>
<dbReference type="GO" id="GO:0016579">
    <property type="term" value="P:protein deubiquitination"/>
    <property type="evidence" value="ECO:0000250"/>
    <property type="project" value="UniProtKB"/>
</dbReference>
<dbReference type="GO" id="GO:0006508">
    <property type="term" value="P:proteolysis"/>
    <property type="evidence" value="ECO:0007669"/>
    <property type="project" value="UniProtKB-KW"/>
</dbReference>
<dbReference type="GO" id="GO:0031647">
    <property type="term" value="P:regulation of protein stability"/>
    <property type="evidence" value="ECO:0000318"/>
    <property type="project" value="GO_Central"/>
</dbReference>
<dbReference type="CDD" id="cd02659">
    <property type="entry name" value="peptidase_C19C"/>
    <property type="match status" value="1"/>
</dbReference>
<dbReference type="FunFam" id="3.10.20.90:FF:000275">
    <property type="entry name" value="Ubiquitin carboxyl-terminal hydrolase"/>
    <property type="match status" value="1"/>
</dbReference>
<dbReference type="FunFam" id="3.90.70.10:FF:000044">
    <property type="entry name" value="Ubiquitin carboxyl-terminal hydrolase 13"/>
    <property type="match status" value="1"/>
</dbReference>
<dbReference type="Gene3D" id="2.60.210.10">
    <property type="entry name" value="Apoptosis, Tumor Necrosis Factor Receptor Associated Protein 2, Chain A"/>
    <property type="match status" value="1"/>
</dbReference>
<dbReference type="Gene3D" id="3.90.70.10">
    <property type="entry name" value="Cysteine proteinases"/>
    <property type="match status" value="1"/>
</dbReference>
<dbReference type="Gene3D" id="3.10.20.90">
    <property type="entry name" value="Phosphatidylinositol 3-kinase Catalytic Subunit, Chain A, domain 1"/>
    <property type="match status" value="1"/>
</dbReference>
<dbReference type="InterPro" id="IPR002083">
    <property type="entry name" value="MATH/TRAF_dom"/>
</dbReference>
<dbReference type="InterPro" id="IPR038765">
    <property type="entry name" value="Papain-like_cys_pep_sf"/>
</dbReference>
<dbReference type="InterPro" id="IPR050164">
    <property type="entry name" value="Peptidase_C19"/>
</dbReference>
<dbReference type="InterPro" id="IPR001394">
    <property type="entry name" value="Peptidase_C19_UCH"/>
</dbReference>
<dbReference type="InterPro" id="IPR008974">
    <property type="entry name" value="TRAF-like"/>
</dbReference>
<dbReference type="InterPro" id="IPR024729">
    <property type="entry name" value="USP7_ICP0-binding_dom"/>
</dbReference>
<dbReference type="InterPro" id="IPR029346">
    <property type="entry name" value="USP_C"/>
</dbReference>
<dbReference type="InterPro" id="IPR018200">
    <property type="entry name" value="USP_CS"/>
</dbReference>
<dbReference type="InterPro" id="IPR028889">
    <property type="entry name" value="USP_dom"/>
</dbReference>
<dbReference type="PANTHER" id="PTHR24006">
    <property type="entry name" value="UBIQUITIN CARBOXYL-TERMINAL HYDROLASE"/>
    <property type="match status" value="1"/>
</dbReference>
<dbReference type="PANTHER" id="PTHR24006:SF644">
    <property type="entry name" value="UBIQUITIN CARBOXYL-TERMINAL HYDROLASE 7"/>
    <property type="match status" value="1"/>
</dbReference>
<dbReference type="Pfam" id="PF00917">
    <property type="entry name" value="MATH"/>
    <property type="match status" value="1"/>
</dbReference>
<dbReference type="Pfam" id="PF00443">
    <property type="entry name" value="UCH"/>
    <property type="match status" value="1"/>
</dbReference>
<dbReference type="Pfam" id="PF14533">
    <property type="entry name" value="USP7_C2"/>
    <property type="match status" value="1"/>
</dbReference>
<dbReference type="Pfam" id="PF12436">
    <property type="entry name" value="USP7_ICP0_bdg"/>
    <property type="match status" value="1"/>
</dbReference>
<dbReference type="SMART" id="SM00061">
    <property type="entry name" value="MATH"/>
    <property type="match status" value="1"/>
</dbReference>
<dbReference type="SUPFAM" id="SSF54001">
    <property type="entry name" value="Cysteine proteinases"/>
    <property type="match status" value="1"/>
</dbReference>
<dbReference type="SUPFAM" id="SSF49599">
    <property type="entry name" value="TRAF domain-like"/>
    <property type="match status" value="1"/>
</dbReference>
<dbReference type="PROSITE" id="PS50144">
    <property type="entry name" value="MATH"/>
    <property type="match status" value="1"/>
</dbReference>
<dbReference type="PROSITE" id="PS00972">
    <property type="entry name" value="USP_1"/>
    <property type="match status" value="1"/>
</dbReference>
<dbReference type="PROSITE" id="PS00973">
    <property type="entry name" value="USP_2"/>
    <property type="match status" value="1"/>
</dbReference>
<dbReference type="PROSITE" id="PS50235">
    <property type="entry name" value="USP_3"/>
    <property type="match status" value="1"/>
</dbReference>